<accession>A9WFA3</accession>
<gene>
    <name evidence="1" type="primary">groEL2</name>
    <name evidence="1" type="synonym">groL2</name>
    <name type="ordered locus">Caur_2888</name>
</gene>
<protein>
    <recommendedName>
        <fullName evidence="1">Chaperonin GroEL 2</fullName>
        <ecNumber evidence="1">5.6.1.7</ecNumber>
    </recommendedName>
    <alternativeName>
        <fullName evidence="1">60 kDa chaperonin 2</fullName>
    </alternativeName>
    <alternativeName>
        <fullName evidence="1">Chaperonin-60 2</fullName>
        <shortName evidence="1">Cpn60 2</shortName>
    </alternativeName>
</protein>
<proteinExistence type="inferred from homology"/>
<keyword id="KW-0067">ATP-binding</keyword>
<keyword id="KW-0143">Chaperone</keyword>
<keyword id="KW-0963">Cytoplasm</keyword>
<keyword id="KW-0413">Isomerase</keyword>
<keyword id="KW-0547">Nucleotide-binding</keyword>
<keyword id="KW-1185">Reference proteome</keyword>
<feature type="chain" id="PRO_0000331994" description="Chaperonin GroEL 2">
    <location>
        <begin position="1"/>
        <end position="545"/>
    </location>
</feature>
<feature type="binding site" evidence="1">
    <location>
        <begin position="29"/>
        <end position="32"/>
    </location>
    <ligand>
        <name>ATP</name>
        <dbReference type="ChEBI" id="CHEBI:30616"/>
    </ligand>
</feature>
<feature type="binding site" evidence="1">
    <location>
        <begin position="86"/>
        <end position="90"/>
    </location>
    <ligand>
        <name>ATP</name>
        <dbReference type="ChEBI" id="CHEBI:30616"/>
    </ligand>
</feature>
<feature type="binding site" evidence="1">
    <location>
        <position position="414"/>
    </location>
    <ligand>
        <name>ATP</name>
        <dbReference type="ChEBI" id="CHEBI:30616"/>
    </ligand>
</feature>
<feature type="binding site" evidence="1">
    <location>
        <position position="499"/>
    </location>
    <ligand>
        <name>ATP</name>
        <dbReference type="ChEBI" id="CHEBI:30616"/>
    </ligand>
</feature>
<name>CH602_CHLAA</name>
<evidence type="ECO:0000255" key="1">
    <source>
        <dbReference type="HAMAP-Rule" id="MF_00600"/>
    </source>
</evidence>
<organism>
    <name type="scientific">Chloroflexus aurantiacus (strain ATCC 29366 / DSM 635 / J-10-fl)</name>
    <dbReference type="NCBI Taxonomy" id="324602"/>
    <lineage>
        <taxon>Bacteria</taxon>
        <taxon>Bacillati</taxon>
        <taxon>Chloroflexota</taxon>
        <taxon>Chloroflexia</taxon>
        <taxon>Chloroflexales</taxon>
        <taxon>Chloroflexineae</taxon>
        <taxon>Chloroflexaceae</taxon>
        <taxon>Chloroflexus</taxon>
    </lineage>
</organism>
<sequence>MAKQLIFDQQARTALKHGIDTLALAVKTTLGPRGRNVALDKKWGAPTVTHDGVSVAKEIELKDPFANLGVQLLKQAAVKTNDVAGDGTTTATVLAQAIINEGLKLVAAGANPMLLKRGLDKGGQALVARIKEQAITLKTRDEIRNVATISAQDAEVGELLATVMDKIGRDGVVTVEEGKSTHLEHELVEGMQFDRGYISPYFITDSARMEAVLDEPYILITDKKISAIKDLLPILEAVLSSGKKDLLVIAEDVDGEALATLVVNKLRGTLNALAVKAPGFGDRRKAMLQDIAILTGGTVISEEIGRKLESATLQDLGRARRVKADKDNTVIVEGHGDKQAIQARIAQLKQQIETTTSDYDREKLQERVAKLSGGVAVIKVGAPTEPAMKERKARVEDALNATRAAVEEGIVPGGGVALLNAIPALDNVTTQFEEERMALNVLRRALEEPLRQLATNAGEDGSVVVENVRNEQRKHNNNHYGYDVMTGTYVDLMQAGIIDPAKVVRSALENAISVAGMVLTTEALIVDAPEPKKKNGTPPMPDDDF</sequence>
<dbReference type="EC" id="5.6.1.7" evidence="1"/>
<dbReference type="EMBL" id="CP000909">
    <property type="protein sequence ID" value="ABY36087.1"/>
    <property type="molecule type" value="Genomic_DNA"/>
</dbReference>
<dbReference type="RefSeq" id="WP_012258740.1">
    <property type="nucleotide sequence ID" value="NC_010175.1"/>
</dbReference>
<dbReference type="RefSeq" id="YP_001636476.1">
    <property type="nucleotide sequence ID" value="NC_010175.1"/>
</dbReference>
<dbReference type="SMR" id="A9WFA3"/>
<dbReference type="FunCoup" id="A9WFA3">
    <property type="interactions" value="486"/>
</dbReference>
<dbReference type="STRING" id="324602.Caur_2888"/>
<dbReference type="EnsemblBacteria" id="ABY36087">
    <property type="protein sequence ID" value="ABY36087"/>
    <property type="gene ID" value="Caur_2888"/>
</dbReference>
<dbReference type="KEGG" id="cau:Caur_2888"/>
<dbReference type="PATRIC" id="fig|324602.8.peg.3252"/>
<dbReference type="eggNOG" id="COG0459">
    <property type="taxonomic scope" value="Bacteria"/>
</dbReference>
<dbReference type="HOGENOM" id="CLU_016503_3_0_0"/>
<dbReference type="InParanoid" id="A9WFA3"/>
<dbReference type="Proteomes" id="UP000002008">
    <property type="component" value="Chromosome"/>
</dbReference>
<dbReference type="GO" id="GO:1990220">
    <property type="term" value="C:GroEL-GroES complex"/>
    <property type="evidence" value="ECO:0000318"/>
    <property type="project" value="GO_Central"/>
</dbReference>
<dbReference type="GO" id="GO:0005524">
    <property type="term" value="F:ATP binding"/>
    <property type="evidence" value="ECO:0000318"/>
    <property type="project" value="GO_Central"/>
</dbReference>
<dbReference type="GO" id="GO:0140662">
    <property type="term" value="F:ATP-dependent protein folding chaperone"/>
    <property type="evidence" value="ECO:0007669"/>
    <property type="project" value="InterPro"/>
</dbReference>
<dbReference type="GO" id="GO:0016853">
    <property type="term" value="F:isomerase activity"/>
    <property type="evidence" value="ECO:0007669"/>
    <property type="project" value="UniProtKB-KW"/>
</dbReference>
<dbReference type="GO" id="GO:0051082">
    <property type="term" value="F:unfolded protein binding"/>
    <property type="evidence" value="ECO:0000318"/>
    <property type="project" value="GO_Central"/>
</dbReference>
<dbReference type="GO" id="GO:0051085">
    <property type="term" value="P:chaperone cofactor-dependent protein refolding"/>
    <property type="evidence" value="ECO:0000318"/>
    <property type="project" value="GO_Central"/>
</dbReference>
<dbReference type="GO" id="GO:0042026">
    <property type="term" value="P:protein refolding"/>
    <property type="evidence" value="ECO:0007669"/>
    <property type="project" value="UniProtKB-UniRule"/>
</dbReference>
<dbReference type="GO" id="GO:0009408">
    <property type="term" value="P:response to heat"/>
    <property type="evidence" value="ECO:0000318"/>
    <property type="project" value="GO_Central"/>
</dbReference>
<dbReference type="CDD" id="cd03344">
    <property type="entry name" value="GroEL"/>
    <property type="match status" value="1"/>
</dbReference>
<dbReference type="FunFam" id="3.50.7.10:FF:000001">
    <property type="entry name" value="60 kDa chaperonin"/>
    <property type="match status" value="1"/>
</dbReference>
<dbReference type="Gene3D" id="3.50.7.10">
    <property type="entry name" value="GroEL"/>
    <property type="match status" value="1"/>
</dbReference>
<dbReference type="Gene3D" id="1.10.560.10">
    <property type="entry name" value="GroEL-like equatorial domain"/>
    <property type="match status" value="1"/>
</dbReference>
<dbReference type="Gene3D" id="3.30.260.10">
    <property type="entry name" value="TCP-1-like chaperonin intermediate domain"/>
    <property type="match status" value="1"/>
</dbReference>
<dbReference type="HAMAP" id="MF_00600">
    <property type="entry name" value="CH60"/>
    <property type="match status" value="1"/>
</dbReference>
<dbReference type="InterPro" id="IPR018370">
    <property type="entry name" value="Chaperonin_Cpn60_CS"/>
</dbReference>
<dbReference type="InterPro" id="IPR001844">
    <property type="entry name" value="Cpn60/GroEL"/>
</dbReference>
<dbReference type="InterPro" id="IPR002423">
    <property type="entry name" value="Cpn60/GroEL/TCP-1"/>
</dbReference>
<dbReference type="InterPro" id="IPR027409">
    <property type="entry name" value="GroEL-like_apical_dom_sf"/>
</dbReference>
<dbReference type="InterPro" id="IPR027413">
    <property type="entry name" value="GROEL-like_equatorial_sf"/>
</dbReference>
<dbReference type="InterPro" id="IPR027410">
    <property type="entry name" value="TCP-1-like_intermed_sf"/>
</dbReference>
<dbReference type="NCBIfam" id="TIGR02348">
    <property type="entry name" value="GroEL"/>
    <property type="match status" value="1"/>
</dbReference>
<dbReference type="NCBIfam" id="NF000592">
    <property type="entry name" value="PRK00013.1"/>
    <property type="match status" value="1"/>
</dbReference>
<dbReference type="NCBIfam" id="NF009487">
    <property type="entry name" value="PRK12849.1"/>
    <property type="match status" value="1"/>
</dbReference>
<dbReference type="NCBIfam" id="NF009488">
    <property type="entry name" value="PRK12850.1"/>
    <property type="match status" value="1"/>
</dbReference>
<dbReference type="NCBIfam" id="NF009489">
    <property type="entry name" value="PRK12851.1"/>
    <property type="match status" value="1"/>
</dbReference>
<dbReference type="PANTHER" id="PTHR45633">
    <property type="entry name" value="60 KDA HEAT SHOCK PROTEIN, MITOCHONDRIAL"/>
    <property type="match status" value="1"/>
</dbReference>
<dbReference type="Pfam" id="PF00118">
    <property type="entry name" value="Cpn60_TCP1"/>
    <property type="match status" value="1"/>
</dbReference>
<dbReference type="PRINTS" id="PR00298">
    <property type="entry name" value="CHAPERONIN60"/>
</dbReference>
<dbReference type="SUPFAM" id="SSF52029">
    <property type="entry name" value="GroEL apical domain-like"/>
    <property type="match status" value="1"/>
</dbReference>
<dbReference type="SUPFAM" id="SSF48592">
    <property type="entry name" value="GroEL equatorial domain-like"/>
    <property type="match status" value="1"/>
</dbReference>
<dbReference type="SUPFAM" id="SSF54849">
    <property type="entry name" value="GroEL-intermediate domain like"/>
    <property type="match status" value="1"/>
</dbReference>
<dbReference type="PROSITE" id="PS00296">
    <property type="entry name" value="CHAPERONINS_CPN60"/>
    <property type="match status" value="1"/>
</dbReference>
<reference key="1">
    <citation type="journal article" date="2011" name="BMC Genomics">
        <title>Complete genome sequence of the filamentous anoxygenic phototrophic bacterium Chloroflexus aurantiacus.</title>
        <authorList>
            <person name="Tang K.H."/>
            <person name="Barry K."/>
            <person name="Chertkov O."/>
            <person name="Dalin E."/>
            <person name="Han C.S."/>
            <person name="Hauser L.J."/>
            <person name="Honchak B.M."/>
            <person name="Karbach L.E."/>
            <person name="Land M.L."/>
            <person name="Lapidus A."/>
            <person name="Larimer F.W."/>
            <person name="Mikhailova N."/>
            <person name="Pitluck S."/>
            <person name="Pierson B.K."/>
            <person name="Blankenship R.E."/>
        </authorList>
    </citation>
    <scope>NUCLEOTIDE SEQUENCE [LARGE SCALE GENOMIC DNA]</scope>
    <source>
        <strain>ATCC 29366 / DSM 635 / J-10-fl</strain>
    </source>
</reference>
<comment type="function">
    <text evidence="1">Together with its co-chaperonin GroES, plays an essential role in assisting protein folding. The GroEL-GroES system forms a nano-cage that allows encapsulation of the non-native substrate proteins and provides a physical environment optimized to promote and accelerate protein folding.</text>
</comment>
<comment type="catalytic activity">
    <reaction evidence="1">
        <text>ATP + H2O + a folded polypeptide = ADP + phosphate + an unfolded polypeptide.</text>
        <dbReference type="EC" id="5.6.1.7"/>
    </reaction>
</comment>
<comment type="subunit">
    <text evidence="1">Forms a cylinder of 14 subunits composed of two heptameric rings stacked back-to-back. Interacts with the co-chaperonin GroES.</text>
</comment>
<comment type="subcellular location">
    <subcellularLocation>
        <location evidence="1">Cytoplasm</location>
    </subcellularLocation>
</comment>
<comment type="similarity">
    <text evidence="1">Belongs to the chaperonin (HSP60) family.</text>
</comment>